<evidence type="ECO:0000255" key="1">
    <source>
        <dbReference type="HAMAP-Rule" id="MF_00059"/>
    </source>
</evidence>
<proteinExistence type="inferred from homology"/>
<feature type="chain" id="PRO_0000175291" description="DNA-directed RNA polymerase subunit alpha">
    <location>
        <begin position="1"/>
        <end position="328"/>
    </location>
</feature>
<feature type="region of interest" description="Alpha N-terminal domain (alpha-NTD)" evidence="1">
    <location>
        <begin position="1"/>
        <end position="231"/>
    </location>
</feature>
<feature type="region of interest" description="Alpha C-terminal domain (alpha-CTD)" evidence="1">
    <location>
        <begin position="247"/>
        <end position="328"/>
    </location>
</feature>
<sequence>MIYQMQMPTKIDVDEATHTGSFGRFIAQPLERGYGVTLGNAMRRVLLASLPGTAITGIKIDGVFHEFSTIDGVREDVPEIVLNLKKVRFKSNCKRSCKTTLTLAGPKDFLAGDIVAQEGEFEVLNKDLHIATINSEATVTIDIYIGRGRGYVPAEENRSDGMPIGFIAIDSIYTPIKNVKLTVENTRVGQKTDYEKMILDVETDGSITPDDAISLAGKIINDHITFFANFSPTEEEFSEEEYKQLDDEFESMRKLLQTKIEDLDLSVRSHNCLRLAEIDSLGDLVSRREEELLNYKNFGKKSLTELKEQLEKFNLKFGMDITRYQLKG</sequence>
<name>RPOA_CHLTE</name>
<accession>Q8KAJ8</accession>
<gene>
    <name evidence="1" type="primary">rpoA</name>
    <name type="ordered locus">CT2162</name>
</gene>
<organism>
    <name type="scientific">Chlorobaculum tepidum (strain ATCC 49652 / DSM 12025 / NBRC 103806 / TLS)</name>
    <name type="common">Chlorobium tepidum</name>
    <dbReference type="NCBI Taxonomy" id="194439"/>
    <lineage>
        <taxon>Bacteria</taxon>
        <taxon>Pseudomonadati</taxon>
        <taxon>Chlorobiota</taxon>
        <taxon>Chlorobiia</taxon>
        <taxon>Chlorobiales</taxon>
        <taxon>Chlorobiaceae</taxon>
        <taxon>Chlorobaculum</taxon>
    </lineage>
</organism>
<dbReference type="EC" id="2.7.7.6" evidence="1"/>
<dbReference type="EMBL" id="AE006470">
    <property type="protein sequence ID" value="AAM73378.1"/>
    <property type="molecule type" value="Genomic_DNA"/>
</dbReference>
<dbReference type="RefSeq" id="NP_663036.1">
    <property type="nucleotide sequence ID" value="NC_002932.3"/>
</dbReference>
<dbReference type="RefSeq" id="WP_010933815.1">
    <property type="nucleotide sequence ID" value="NC_002932.3"/>
</dbReference>
<dbReference type="SMR" id="Q8KAJ8"/>
<dbReference type="STRING" id="194439.CT2162"/>
<dbReference type="EnsemblBacteria" id="AAM73378">
    <property type="protein sequence ID" value="AAM73378"/>
    <property type="gene ID" value="CT2162"/>
</dbReference>
<dbReference type="KEGG" id="cte:CT2162"/>
<dbReference type="PATRIC" id="fig|194439.7.peg.1961"/>
<dbReference type="eggNOG" id="COG0202">
    <property type="taxonomic scope" value="Bacteria"/>
</dbReference>
<dbReference type="HOGENOM" id="CLU_053084_0_1_10"/>
<dbReference type="OrthoDB" id="9805706at2"/>
<dbReference type="Proteomes" id="UP000001007">
    <property type="component" value="Chromosome"/>
</dbReference>
<dbReference type="GO" id="GO:0005737">
    <property type="term" value="C:cytoplasm"/>
    <property type="evidence" value="ECO:0007669"/>
    <property type="project" value="UniProtKB-ARBA"/>
</dbReference>
<dbReference type="GO" id="GO:0000428">
    <property type="term" value="C:DNA-directed RNA polymerase complex"/>
    <property type="evidence" value="ECO:0007669"/>
    <property type="project" value="UniProtKB-KW"/>
</dbReference>
<dbReference type="GO" id="GO:0003677">
    <property type="term" value="F:DNA binding"/>
    <property type="evidence" value="ECO:0007669"/>
    <property type="project" value="UniProtKB-UniRule"/>
</dbReference>
<dbReference type="GO" id="GO:0003899">
    <property type="term" value="F:DNA-directed RNA polymerase activity"/>
    <property type="evidence" value="ECO:0007669"/>
    <property type="project" value="UniProtKB-UniRule"/>
</dbReference>
<dbReference type="GO" id="GO:0046983">
    <property type="term" value="F:protein dimerization activity"/>
    <property type="evidence" value="ECO:0007669"/>
    <property type="project" value="InterPro"/>
</dbReference>
<dbReference type="GO" id="GO:0006351">
    <property type="term" value="P:DNA-templated transcription"/>
    <property type="evidence" value="ECO:0007669"/>
    <property type="project" value="UniProtKB-UniRule"/>
</dbReference>
<dbReference type="CDD" id="cd06928">
    <property type="entry name" value="RNAP_alpha_NTD"/>
    <property type="match status" value="1"/>
</dbReference>
<dbReference type="FunFam" id="2.170.120.12:FF:000001">
    <property type="entry name" value="DNA-directed RNA polymerase subunit alpha"/>
    <property type="match status" value="1"/>
</dbReference>
<dbReference type="Gene3D" id="1.10.150.20">
    <property type="entry name" value="5' to 3' exonuclease, C-terminal subdomain"/>
    <property type="match status" value="1"/>
</dbReference>
<dbReference type="Gene3D" id="2.170.120.12">
    <property type="entry name" value="DNA-directed RNA polymerase, insert domain"/>
    <property type="match status" value="1"/>
</dbReference>
<dbReference type="Gene3D" id="3.30.1360.10">
    <property type="entry name" value="RNA polymerase, RBP11-like subunit"/>
    <property type="match status" value="1"/>
</dbReference>
<dbReference type="HAMAP" id="MF_00059">
    <property type="entry name" value="RNApol_bact_RpoA"/>
    <property type="match status" value="1"/>
</dbReference>
<dbReference type="InterPro" id="IPR011262">
    <property type="entry name" value="DNA-dir_RNA_pol_insert"/>
</dbReference>
<dbReference type="InterPro" id="IPR011263">
    <property type="entry name" value="DNA-dir_RNA_pol_RpoA/D/Rpb3"/>
</dbReference>
<dbReference type="InterPro" id="IPR011773">
    <property type="entry name" value="DNA-dir_RpoA"/>
</dbReference>
<dbReference type="InterPro" id="IPR036603">
    <property type="entry name" value="RBP11-like"/>
</dbReference>
<dbReference type="InterPro" id="IPR011260">
    <property type="entry name" value="RNAP_asu_C"/>
</dbReference>
<dbReference type="InterPro" id="IPR036643">
    <property type="entry name" value="RNApol_insert_sf"/>
</dbReference>
<dbReference type="NCBIfam" id="NF003513">
    <property type="entry name" value="PRK05182.1-2"/>
    <property type="match status" value="1"/>
</dbReference>
<dbReference type="NCBIfam" id="NF003519">
    <property type="entry name" value="PRK05182.2-5"/>
    <property type="match status" value="1"/>
</dbReference>
<dbReference type="NCBIfam" id="TIGR02027">
    <property type="entry name" value="rpoA"/>
    <property type="match status" value="1"/>
</dbReference>
<dbReference type="Pfam" id="PF01000">
    <property type="entry name" value="RNA_pol_A_bac"/>
    <property type="match status" value="1"/>
</dbReference>
<dbReference type="Pfam" id="PF03118">
    <property type="entry name" value="RNA_pol_A_CTD"/>
    <property type="match status" value="1"/>
</dbReference>
<dbReference type="Pfam" id="PF01193">
    <property type="entry name" value="RNA_pol_L"/>
    <property type="match status" value="1"/>
</dbReference>
<dbReference type="SMART" id="SM00662">
    <property type="entry name" value="RPOLD"/>
    <property type="match status" value="1"/>
</dbReference>
<dbReference type="SUPFAM" id="SSF47789">
    <property type="entry name" value="C-terminal domain of RNA polymerase alpha subunit"/>
    <property type="match status" value="1"/>
</dbReference>
<dbReference type="SUPFAM" id="SSF56553">
    <property type="entry name" value="Insert subdomain of RNA polymerase alpha subunit"/>
    <property type="match status" value="1"/>
</dbReference>
<dbReference type="SUPFAM" id="SSF55257">
    <property type="entry name" value="RBP11-like subunits of RNA polymerase"/>
    <property type="match status" value="1"/>
</dbReference>
<comment type="function">
    <text evidence="1">DNA-dependent RNA polymerase catalyzes the transcription of DNA into RNA using the four ribonucleoside triphosphates as substrates.</text>
</comment>
<comment type="catalytic activity">
    <reaction evidence="1">
        <text>RNA(n) + a ribonucleoside 5'-triphosphate = RNA(n+1) + diphosphate</text>
        <dbReference type="Rhea" id="RHEA:21248"/>
        <dbReference type="Rhea" id="RHEA-COMP:14527"/>
        <dbReference type="Rhea" id="RHEA-COMP:17342"/>
        <dbReference type="ChEBI" id="CHEBI:33019"/>
        <dbReference type="ChEBI" id="CHEBI:61557"/>
        <dbReference type="ChEBI" id="CHEBI:140395"/>
        <dbReference type="EC" id="2.7.7.6"/>
    </reaction>
</comment>
<comment type="subunit">
    <text evidence="1">Homodimer. The RNAP catalytic core consists of 2 alpha, 1 beta, 1 beta' and 1 omega subunit. When a sigma factor is associated with the core the holoenzyme is formed, which can initiate transcription.</text>
</comment>
<comment type="domain">
    <text evidence="1">The N-terminal domain is essential for RNAP assembly and basal transcription, whereas the C-terminal domain is involved in interaction with transcriptional regulators and with upstream promoter elements.</text>
</comment>
<comment type="similarity">
    <text evidence="1">Belongs to the RNA polymerase alpha chain family.</text>
</comment>
<protein>
    <recommendedName>
        <fullName evidence="1">DNA-directed RNA polymerase subunit alpha</fullName>
        <shortName evidence="1">RNAP subunit alpha</shortName>
        <ecNumber evidence="1">2.7.7.6</ecNumber>
    </recommendedName>
    <alternativeName>
        <fullName evidence="1">RNA polymerase subunit alpha</fullName>
    </alternativeName>
    <alternativeName>
        <fullName evidence="1">Transcriptase subunit alpha</fullName>
    </alternativeName>
</protein>
<reference key="1">
    <citation type="journal article" date="2002" name="Proc. Natl. Acad. Sci. U.S.A.">
        <title>The complete genome sequence of Chlorobium tepidum TLS, a photosynthetic, anaerobic, green-sulfur bacterium.</title>
        <authorList>
            <person name="Eisen J.A."/>
            <person name="Nelson K.E."/>
            <person name="Paulsen I.T."/>
            <person name="Heidelberg J.F."/>
            <person name="Wu M."/>
            <person name="Dodson R.J."/>
            <person name="DeBoy R.T."/>
            <person name="Gwinn M.L."/>
            <person name="Nelson W.C."/>
            <person name="Haft D.H."/>
            <person name="Hickey E.K."/>
            <person name="Peterson J.D."/>
            <person name="Durkin A.S."/>
            <person name="Kolonay J.F."/>
            <person name="Yang F."/>
            <person name="Holt I.E."/>
            <person name="Umayam L.A."/>
            <person name="Mason T.M."/>
            <person name="Brenner M."/>
            <person name="Shea T.P."/>
            <person name="Parksey D.S."/>
            <person name="Nierman W.C."/>
            <person name="Feldblyum T.V."/>
            <person name="Hansen C.L."/>
            <person name="Craven M.B."/>
            <person name="Radune D."/>
            <person name="Vamathevan J.J."/>
            <person name="Khouri H.M."/>
            <person name="White O."/>
            <person name="Gruber T.M."/>
            <person name="Ketchum K.A."/>
            <person name="Venter J.C."/>
            <person name="Tettelin H."/>
            <person name="Bryant D.A."/>
            <person name="Fraser C.M."/>
        </authorList>
    </citation>
    <scope>NUCLEOTIDE SEQUENCE [LARGE SCALE GENOMIC DNA]</scope>
    <source>
        <strain>ATCC 49652 / DSM 12025 / NBRC 103806 / TLS</strain>
    </source>
</reference>
<keyword id="KW-0240">DNA-directed RNA polymerase</keyword>
<keyword id="KW-0548">Nucleotidyltransferase</keyword>
<keyword id="KW-1185">Reference proteome</keyword>
<keyword id="KW-0804">Transcription</keyword>
<keyword id="KW-0808">Transferase</keyword>